<protein>
    <recommendedName>
        <fullName>Sulfate permease 2</fullName>
    </recommendedName>
    <alternativeName>
        <fullName>High-affinity sulfate transporter 2</fullName>
    </alternativeName>
</protein>
<organism>
    <name type="scientific">Saccharomyces cerevisiae (strain ATCC 204508 / S288c)</name>
    <name type="common">Baker's yeast</name>
    <dbReference type="NCBI Taxonomy" id="559292"/>
    <lineage>
        <taxon>Eukaryota</taxon>
        <taxon>Fungi</taxon>
        <taxon>Dikarya</taxon>
        <taxon>Ascomycota</taxon>
        <taxon>Saccharomycotina</taxon>
        <taxon>Saccharomycetes</taxon>
        <taxon>Saccharomycetales</taxon>
        <taxon>Saccharomycetaceae</taxon>
        <taxon>Saccharomyces</taxon>
    </lineage>
</organism>
<name>SUL2_YEAST</name>
<gene>
    <name type="primary">SUL2</name>
    <name type="synonym">SEL2</name>
    <name type="ordered locus">YLR092W</name>
    <name type="ORF">L9449.1</name>
</gene>
<dbReference type="EMBL" id="U53880">
    <property type="protein sequence ID" value="AAB67596.1"/>
    <property type="molecule type" value="Genomic_DNA"/>
</dbReference>
<dbReference type="EMBL" id="Z73264">
    <property type="protein sequence ID" value="CAA97653.1"/>
    <property type="molecule type" value="Genomic_DNA"/>
</dbReference>
<dbReference type="EMBL" id="Z73265">
    <property type="protein sequence ID" value="CAA97655.1"/>
    <property type="molecule type" value="Genomic_DNA"/>
</dbReference>
<dbReference type="EMBL" id="U53876">
    <property type="protein sequence ID" value="AAB67550.1"/>
    <property type="molecule type" value="Genomic_DNA"/>
</dbReference>
<dbReference type="EMBL" id="BK006945">
    <property type="protein sequence ID" value="DAA09408.1"/>
    <property type="molecule type" value="Genomic_DNA"/>
</dbReference>
<dbReference type="PIR" id="S64926">
    <property type="entry name" value="S64926"/>
</dbReference>
<dbReference type="RefSeq" id="NP_013193.1">
    <property type="nucleotide sequence ID" value="NM_001181979.1"/>
</dbReference>
<dbReference type="SMR" id="Q12325"/>
<dbReference type="BioGRID" id="31365">
    <property type="interactions" value="82"/>
</dbReference>
<dbReference type="DIP" id="DIP-5082N"/>
<dbReference type="FunCoup" id="Q12325">
    <property type="interactions" value="633"/>
</dbReference>
<dbReference type="IntAct" id="Q12325">
    <property type="interactions" value="4"/>
</dbReference>
<dbReference type="STRING" id="4932.YLR092W"/>
<dbReference type="TCDB" id="2.A.53.1.13">
    <property type="family name" value="the sulfate permease (sulp) family"/>
</dbReference>
<dbReference type="iPTMnet" id="Q12325"/>
<dbReference type="PaxDb" id="4932-YLR092W"/>
<dbReference type="PeptideAtlas" id="Q12325"/>
<dbReference type="TopDownProteomics" id="Q12325"/>
<dbReference type="EnsemblFungi" id="YLR092W_mRNA">
    <property type="protein sequence ID" value="YLR092W"/>
    <property type="gene ID" value="YLR092W"/>
</dbReference>
<dbReference type="GeneID" id="850781"/>
<dbReference type="KEGG" id="sce:YLR092W"/>
<dbReference type="AGR" id="SGD:S000004082"/>
<dbReference type="SGD" id="S000004082">
    <property type="gene designation" value="SUL2"/>
</dbReference>
<dbReference type="VEuPathDB" id="FungiDB:YLR092W"/>
<dbReference type="eggNOG" id="KOG0236">
    <property type="taxonomic scope" value="Eukaryota"/>
</dbReference>
<dbReference type="GeneTree" id="ENSGT01120000271864"/>
<dbReference type="HOGENOM" id="CLU_003182_8_1_1"/>
<dbReference type="InParanoid" id="Q12325"/>
<dbReference type="OMA" id="ISWGIVH"/>
<dbReference type="OrthoDB" id="288203at2759"/>
<dbReference type="BioCyc" id="YEAST:G3O-32242-MONOMER"/>
<dbReference type="Reactome" id="R-SCE-174362">
    <property type="pathway name" value="Transport and synthesis of PAPS"/>
</dbReference>
<dbReference type="Reactome" id="R-SCE-427601">
    <property type="pathway name" value="Multifunctional anion exchangers"/>
</dbReference>
<dbReference type="BioGRID-ORCS" id="850781">
    <property type="hits" value="3 hits in 10 CRISPR screens"/>
</dbReference>
<dbReference type="PRO" id="PR:Q12325"/>
<dbReference type="Proteomes" id="UP000002311">
    <property type="component" value="Chromosome XII"/>
</dbReference>
<dbReference type="RNAct" id="Q12325">
    <property type="molecule type" value="protein"/>
</dbReference>
<dbReference type="GO" id="GO:0005886">
    <property type="term" value="C:plasma membrane"/>
    <property type="evidence" value="ECO:0000315"/>
    <property type="project" value="SGD"/>
</dbReference>
<dbReference type="GO" id="GO:0008271">
    <property type="term" value="F:secondary active sulfate transmembrane transporter activity"/>
    <property type="evidence" value="ECO:0007669"/>
    <property type="project" value="InterPro"/>
</dbReference>
<dbReference type="GO" id="GO:0015116">
    <property type="term" value="F:sulfate transmembrane transporter activity"/>
    <property type="evidence" value="ECO:0000315"/>
    <property type="project" value="SGD"/>
</dbReference>
<dbReference type="GO" id="GO:1902476">
    <property type="term" value="P:chloride transmembrane transport"/>
    <property type="evidence" value="ECO:0000318"/>
    <property type="project" value="GO_Central"/>
</dbReference>
<dbReference type="GO" id="GO:1902358">
    <property type="term" value="P:sulfate transmembrane transport"/>
    <property type="evidence" value="ECO:0000315"/>
    <property type="project" value="SGD"/>
</dbReference>
<dbReference type="Gene3D" id="3.30.750.24">
    <property type="entry name" value="STAS domain"/>
    <property type="match status" value="1"/>
</dbReference>
<dbReference type="InterPro" id="IPR018045">
    <property type="entry name" value="S04_transporter_CS"/>
</dbReference>
<dbReference type="InterPro" id="IPR011547">
    <property type="entry name" value="SLC26A/SulP_dom"/>
</dbReference>
<dbReference type="InterPro" id="IPR001902">
    <property type="entry name" value="SLC26A/SulP_fam"/>
</dbReference>
<dbReference type="InterPro" id="IPR002645">
    <property type="entry name" value="STAS_dom"/>
</dbReference>
<dbReference type="InterPro" id="IPR036513">
    <property type="entry name" value="STAS_dom_sf"/>
</dbReference>
<dbReference type="NCBIfam" id="TIGR00815">
    <property type="entry name" value="sulP"/>
    <property type="match status" value="1"/>
</dbReference>
<dbReference type="PANTHER" id="PTHR11814">
    <property type="entry name" value="SULFATE TRANSPORTER"/>
    <property type="match status" value="1"/>
</dbReference>
<dbReference type="Pfam" id="PF00916">
    <property type="entry name" value="Sulfate_transp"/>
    <property type="match status" value="1"/>
</dbReference>
<dbReference type="SUPFAM" id="SSF52091">
    <property type="entry name" value="SpoIIaa-like"/>
    <property type="match status" value="1"/>
</dbReference>
<dbReference type="PROSITE" id="PS01130">
    <property type="entry name" value="SLC26A"/>
    <property type="match status" value="1"/>
</dbReference>
<dbReference type="PROSITE" id="PS50801">
    <property type="entry name" value="STAS"/>
    <property type="match status" value="1"/>
</dbReference>
<accession>Q12325</accession>
<accession>D6VY92</accession>
<evidence type="ECO:0000255" key="1"/>
<evidence type="ECO:0000255" key="2">
    <source>
        <dbReference type="PROSITE-ProRule" id="PRU00198"/>
    </source>
</evidence>
<evidence type="ECO:0000256" key="3">
    <source>
        <dbReference type="SAM" id="MobiDB-lite"/>
    </source>
</evidence>
<evidence type="ECO:0000305" key="4"/>
<proteinExistence type="evidence at protein level"/>
<comment type="function">
    <text>High affinity uptake of sulfate into the cell.</text>
</comment>
<comment type="subcellular location">
    <subcellularLocation>
        <location>Membrane</location>
        <topology>Multi-pass membrane protein</topology>
    </subcellularLocation>
</comment>
<comment type="similarity">
    <text evidence="4">Belongs to the SLC26A/SulP transporter (TC 2.A.53) family.</text>
</comment>
<keyword id="KW-0472">Membrane</keyword>
<keyword id="KW-1185">Reference proteome</keyword>
<keyword id="KW-0812">Transmembrane</keyword>
<keyword id="KW-1133">Transmembrane helix</keyword>
<keyword id="KW-0813">Transport</keyword>
<reference key="1">
    <citation type="journal article" date="1997" name="Nature">
        <title>The nucleotide sequence of Saccharomyces cerevisiae chromosome XII.</title>
        <authorList>
            <person name="Johnston M."/>
            <person name="Hillier L.W."/>
            <person name="Riles L."/>
            <person name="Albermann K."/>
            <person name="Andre B."/>
            <person name="Ansorge W."/>
            <person name="Benes V."/>
            <person name="Brueckner M."/>
            <person name="Delius H."/>
            <person name="Dubois E."/>
            <person name="Duesterhoeft A."/>
            <person name="Entian K.-D."/>
            <person name="Floeth M."/>
            <person name="Goffeau A."/>
            <person name="Hebling U."/>
            <person name="Heumann K."/>
            <person name="Heuss-Neitzel D."/>
            <person name="Hilbert H."/>
            <person name="Hilger F."/>
            <person name="Kleine K."/>
            <person name="Koetter P."/>
            <person name="Louis E.J."/>
            <person name="Messenguy F."/>
            <person name="Mewes H.-W."/>
            <person name="Miosga T."/>
            <person name="Moestl D."/>
            <person name="Mueller-Auer S."/>
            <person name="Nentwich U."/>
            <person name="Obermaier B."/>
            <person name="Piravandi E."/>
            <person name="Pohl T.M."/>
            <person name="Portetelle D."/>
            <person name="Purnelle B."/>
            <person name="Rechmann S."/>
            <person name="Rieger M."/>
            <person name="Rinke M."/>
            <person name="Rose M."/>
            <person name="Scharfe M."/>
            <person name="Scherens B."/>
            <person name="Scholler P."/>
            <person name="Schwager C."/>
            <person name="Schwarz S."/>
            <person name="Underwood A.P."/>
            <person name="Urrestarazu L.A."/>
            <person name="Vandenbol M."/>
            <person name="Verhasselt P."/>
            <person name="Vierendeels F."/>
            <person name="Voet M."/>
            <person name="Volckaert G."/>
            <person name="Voss H."/>
            <person name="Wambutt R."/>
            <person name="Wedler E."/>
            <person name="Wedler H."/>
            <person name="Zimmermann F.K."/>
            <person name="Zollner A."/>
            <person name="Hani J."/>
            <person name="Hoheisel J.D."/>
        </authorList>
    </citation>
    <scope>NUCLEOTIDE SEQUENCE [LARGE SCALE GENOMIC DNA]</scope>
    <source>
        <strain>ATCC 204508 / S288c</strain>
    </source>
</reference>
<reference key="2">
    <citation type="journal article" date="2014" name="G3 (Bethesda)">
        <title>The reference genome sequence of Saccharomyces cerevisiae: Then and now.</title>
        <authorList>
            <person name="Engel S.R."/>
            <person name="Dietrich F.S."/>
            <person name="Fisk D.G."/>
            <person name="Binkley G."/>
            <person name="Balakrishnan R."/>
            <person name="Costanzo M.C."/>
            <person name="Dwight S.S."/>
            <person name="Hitz B.C."/>
            <person name="Karra K."/>
            <person name="Nash R.S."/>
            <person name="Weng S."/>
            <person name="Wong E.D."/>
            <person name="Lloyd P."/>
            <person name="Skrzypek M.S."/>
            <person name="Miyasato S.R."/>
            <person name="Simison M."/>
            <person name="Cherry J.M."/>
        </authorList>
    </citation>
    <scope>GENOME REANNOTATION</scope>
    <source>
        <strain>ATCC 204508 / S288c</strain>
    </source>
</reference>
<reference key="3">
    <citation type="journal article" date="1997" name="Genetics">
        <title>Molecular characterization of two high affinity sulfate transporters in Saccharomyces cerevisiae.</title>
        <authorList>
            <person name="Cherest H."/>
            <person name="Davidian J.C."/>
            <person name="Thomas D."/>
            <person name="Benes V."/>
            <person name="Ansorge W."/>
            <person name="Surdin-Kerjan Y."/>
        </authorList>
    </citation>
    <scope>CHARACTERIZATION</scope>
</reference>
<reference key="4">
    <citation type="journal article" date="2006" name="Proc. Natl. Acad. Sci. U.S.A.">
        <title>A global topology map of the Saccharomyces cerevisiae membrane proteome.</title>
        <authorList>
            <person name="Kim H."/>
            <person name="Melen K."/>
            <person name="Oesterberg M."/>
            <person name="von Heijne G."/>
        </authorList>
    </citation>
    <scope>TOPOLOGY [LARGE SCALE ANALYSIS]</scope>
    <source>
        <strain>ATCC 208353 / W303-1A</strain>
    </source>
</reference>
<feature type="chain" id="PRO_0000080185" description="Sulfate permease 2">
    <location>
        <begin position="1"/>
        <end position="893"/>
    </location>
</feature>
<feature type="topological domain" description="Cytoplasmic" evidence="1">
    <location>
        <begin position="1"/>
        <end position="131"/>
    </location>
</feature>
<feature type="transmembrane region" description="Helical" evidence="1">
    <location>
        <begin position="132"/>
        <end position="152"/>
    </location>
</feature>
<feature type="topological domain" description="Extracellular" evidence="1">
    <location>
        <begin position="153"/>
        <end position="163"/>
    </location>
</feature>
<feature type="transmembrane region" description="Helical" evidence="1">
    <location>
        <begin position="164"/>
        <end position="184"/>
    </location>
</feature>
<feature type="topological domain" description="Cytoplasmic" evidence="1">
    <location>
        <begin position="185"/>
        <end position="188"/>
    </location>
</feature>
<feature type="transmembrane region" description="Helical" evidence="1">
    <location>
        <begin position="189"/>
        <end position="209"/>
    </location>
</feature>
<feature type="topological domain" description="Extracellular" evidence="1">
    <location>
        <begin position="210"/>
        <end position="221"/>
    </location>
</feature>
<feature type="transmembrane region" description="Helical" evidence="1">
    <location>
        <begin position="222"/>
        <end position="242"/>
    </location>
</feature>
<feature type="topological domain" description="Cytoplasmic" evidence="1">
    <location>
        <begin position="243"/>
        <end position="244"/>
    </location>
</feature>
<feature type="transmembrane region" description="Helical" evidence="1">
    <location>
        <begin position="245"/>
        <end position="265"/>
    </location>
</feature>
<feature type="topological domain" description="Extracellular" evidence="1">
    <location>
        <begin position="266"/>
        <end position="305"/>
    </location>
</feature>
<feature type="transmembrane region" description="Helical" evidence="1">
    <location>
        <begin position="306"/>
        <end position="326"/>
    </location>
</feature>
<feature type="topological domain" description="Cytoplasmic" evidence="1">
    <location>
        <begin position="327"/>
        <end position="350"/>
    </location>
</feature>
<feature type="transmembrane region" description="Helical" evidence="1">
    <location>
        <begin position="351"/>
        <end position="371"/>
    </location>
</feature>
<feature type="topological domain" description="Extracellular" evidence="1">
    <location>
        <begin position="372"/>
        <end position="399"/>
    </location>
</feature>
<feature type="transmembrane region" description="Helical" evidence="1">
    <location>
        <begin position="400"/>
        <end position="420"/>
    </location>
</feature>
<feature type="topological domain" description="Cytoplasmic" evidence="1">
    <location>
        <begin position="421"/>
        <end position="443"/>
    </location>
</feature>
<feature type="transmembrane region" description="Helical" evidence="1">
    <location>
        <begin position="444"/>
        <end position="464"/>
    </location>
</feature>
<feature type="topological domain" description="Extracellular" evidence="1">
    <location>
        <begin position="465"/>
        <end position="483"/>
    </location>
</feature>
<feature type="transmembrane region" description="Helical" evidence="1">
    <location>
        <begin position="484"/>
        <end position="504"/>
    </location>
</feature>
<feature type="topological domain" description="Cytoplasmic" evidence="1">
    <location>
        <begin position="505"/>
        <end position="532"/>
    </location>
</feature>
<feature type="transmembrane region" description="Helical" evidence="1">
    <location>
        <begin position="533"/>
        <end position="551"/>
    </location>
</feature>
<feature type="topological domain" description="Extracellular" evidence="1">
    <location>
        <begin position="552"/>
        <end position="559"/>
    </location>
</feature>
<feature type="transmembrane region" description="Helical" evidence="1">
    <location>
        <begin position="560"/>
        <end position="580"/>
    </location>
</feature>
<feature type="topological domain" description="Cytoplasmic" evidence="1">
    <location>
        <begin position="581"/>
        <end position="893"/>
    </location>
</feature>
<feature type="domain" description="STAS" evidence="2">
    <location>
        <begin position="676"/>
        <end position="854"/>
    </location>
</feature>
<feature type="region of interest" description="Disordered" evidence="3">
    <location>
        <begin position="1"/>
        <end position="25"/>
    </location>
</feature>
<sequence>MSREGYPNFEEVEIPDFQETNNTVPDLDDLELEYDQYKNNENNDTFNDKDLESNSVAKHNAVNSSKGVKGSKIDYFNPSDVSLYDNSVSQFEETTVSLKEYYDHSIRSHLTVKGACSYLKSVFPIINWLPHYNFSWFTADLIAGITIGCVLVPQSMSYAQVATLPAQYGLYSSFIGAYSYSFFATSKDVCIGPVAVMSLQTAKVIADVTAKYPDGDSAITGPVIATTLALLCGIISAAVGFLRLGFLVELISLNAVAGFMTGSAFNILWGQVPALMGYNSLVNTRAATYKVVIETLKHLPDTKLDAVFGLIPLFLLYVWKWWCGTYGPRLNDRYNSKNPRLHKIIKWTYFYAQASRNGIIIIVFTCIGWAITRGKSKSERPISILGSVPSGLKEVGVFHVPPGLMSKLGPNLPASIIVLLLEHIAISKSFGRINDYKVVPDQELIAIGVSNLLGTFFNAYPATGSFSRSALKAKCNVRTPLSGLFSGSCVLLALYCLTGAFFYIPKATLSAVIIHAVSDLLASYQTTWNFWKMNPLDFICFIVTVLITVFASIEDGIYFAMCWSCAMLILKVAFPAGKFLGRVEVAEVTDAYVRPDSDVVSYVSENNNGISTLEDGGEDDKESSTKYVTNSSKKIETNVQTKGFDSPSSSISQPRIKYHTKWIPFDHKYTRELNPDVQILPPPDGVLVYRLSESYTYLNCSRHYNIITEEVKKVTRRGQLIRHRKKSDRPWNDPGPWEAPAFLKNLKFWKKRENDPESMENAPSTSVDVERDDRPLLKILCLDFSQVAQTDATALQSLVDLRKAINQYADRQVEFHFVGIISPWVKRGLISRGFGTLNEEYSDESIVAGHTSYHVARVPQGEENPEKYSVYTASGTNLPFFHIDIPDFAKWDI</sequence>